<keyword id="KW-1185">Reference proteome</keyword>
<keyword id="KW-0678">Repressor</keyword>
<keyword id="KW-0346">Stress response</keyword>
<keyword id="KW-0804">Transcription</keyword>
<keyword id="KW-0805">Transcription regulation</keyword>
<proteinExistence type="inferred from homology"/>
<protein>
    <recommendedName>
        <fullName evidence="1">Heat-inducible transcription repressor HrcA</fullName>
    </recommendedName>
</protein>
<organism>
    <name type="scientific">Corynebacterium jeikeium (strain K411)</name>
    <dbReference type="NCBI Taxonomy" id="306537"/>
    <lineage>
        <taxon>Bacteria</taxon>
        <taxon>Bacillati</taxon>
        <taxon>Actinomycetota</taxon>
        <taxon>Actinomycetes</taxon>
        <taxon>Mycobacteriales</taxon>
        <taxon>Corynebacteriaceae</taxon>
        <taxon>Corynebacterium</taxon>
    </lineage>
</organism>
<dbReference type="EMBL" id="CR931997">
    <property type="protein sequence ID" value="CAI36759.1"/>
    <property type="molecule type" value="Genomic_DNA"/>
</dbReference>
<dbReference type="RefSeq" id="WP_011273244.1">
    <property type="nucleotide sequence ID" value="NC_007164.1"/>
</dbReference>
<dbReference type="SMR" id="Q4JWP8"/>
<dbReference type="STRING" id="306537.jk0600"/>
<dbReference type="KEGG" id="cjk:jk0600"/>
<dbReference type="PATRIC" id="fig|306537.10.peg.611"/>
<dbReference type="eggNOG" id="COG1420">
    <property type="taxonomic scope" value="Bacteria"/>
</dbReference>
<dbReference type="HOGENOM" id="CLU_050019_2_0_11"/>
<dbReference type="OrthoDB" id="9783139at2"/>
<dbReference type="Proteomes" id="UP000000545">
    <property type="component" value="Chromosome"/>
</dbReference>
<dbReference type="GO" id="GO:0003677">
    <property type="term" value="F:DNA binding"/>
    <property type="evidence" value="ECO:0007669"/>
    <property type="project" value="InterPro"/>
</dbReference>
<dbReference type="GO" id="GO:0045892">
    <property type="term" value="P:negative regulation of DNA-templated transcription"/>
    <property type="evidence" value="ECO:0007669"/>
    <property type="project" value="UniProtKB-UniRule"/>
</dbReference>
<dbReference type="Gene3D" id="3.30.450.40">
    <property type="match status" value="1"/>
</dbReference>
<dbReference type="Gene3D" id="3.30.390.60">
    <property type="entry name" value="Heat-inducible transcription repressor hrca homolog, domain 3"/>
    <property type="match status" value="1"/>
</dbReference>
<dbReference type="Gene3D" id="1.10.10.10">
    <property type="entry name" value="Winged helix-like DNA-binding domain superfamily/Winged helix DNA-binding domain"/>
    <property type="match status" value="1"/>
</dbReference>
<dbReference type="HAMAP" id="MF_00081">
    <property type="entry name" value="HrcA"/>
    <property type="match status" value="1"/>
</dbReference>
<dbReference type="InterPro" id="IPR029016">
    <property type="entry name" value="GAF-like_dom_sf"/>
</dbReference>
<dbReference type="InterPro" id="IPR002571">
    <property type="entry name" value="HrcA"/>
</dbReference>
<dbReference type="InterPro" id="IPR021153">
    <property type="entry name" value="HrcA_C"/>
</dbReference>
<dbReference type="InterPro" id="IPR036388">
    <property type="entry name" value="WH-like_DNA-bd_sf"/>
</dbReference>
<dbReference type="InterPro" id="IPR036390">
    <property type="entry name" value="WH_DNA-bd_sf"/>
</dbReference>
<dbReference type="InterPro" id="IPR023120">
    <property type="entry name" value="WHTH_transcript_rep_HrcA_IDD"/>
</dbReference>
<dbReference type="NCBIfam" id="TIGR00331">
    <property type="entry name" value="hrcA"/>
    <property type="match status" value="1"/>
</dbReference>
<dbReference type="PANTHER" id="PTHR34824">
    <property type="entry name" value="HEAT-INDUCIBLE TRANSCRIPTION REPRESSOR HRCA"/>
    <property type="match status" value="1"/>
</dbReference>
<dbReference type="PANTHER" id="PTHR34824:SF1">
    <property type="entry name" value="HEAT-INDUCIBLE TRANSCRIPTION REPRESSOR HRCA"/>
    <property type="match status" value="1"/>
</dbReference>
<dbReference type="Pfam" id="PF01628">
    <property type="entry name" value="HrcA"/>
    <property type="match status" value="1"/>
</dbReference>
<dbReference type="PIRSF" id="PIRSF005485">
    <property type="entry name" value="HrcA"/>
    <property type="match status" value="1"/>
</dbReference>
<dbReference type="SUPFAM" id="SSF55781">
    <property type="entry name" value="GAF domain-like"/>
    <property type="match status" value="1"/>
</dbReference>
<dbReference type="SUPFAM" id="SSF46785">
    <property type="entry name" value="Winged helix' DNA-binding domain"/>
    <property type="match status" value="1"/>
</dbReference>
<gene>
    <name evidence="1" type="primary">hrcA</name>
    <name type="ordered locus">jk0600</name>
</gene>
<feature type="chain" id="PRO_1000010402" description="Heat-inducible transcription repressor HrcA">
    <location>
        <begin position="1"/>
        <end position="341"/>
    </location>
</feature>
<evidence type="ECO:0000255" key="1">
    <source>
        <dbReference type="HAMAP-Rule" id="MF_00081"/>
    </source>
</evidence>
<name>HRCA_CORJK</name>
<reference key="1">
    <citation type="journal article" date="2005" name="J. Bacteriol.">
        <title>Complete genome sequence and analysis of the multiresistant nosocomial pathogen Corynebacterium jeikeium K411, a lipid-requiring bacterium of the human skin flora.</title>
        <authorList>
            <person name="Tauch A."/>
            <person name="Kaiser O."/>
            <person name="Hain T."/>
            <person name="Goesmann A."/>
            <person name="Weisshaar B."/>
            <person name="Albersmeier A."/>
            <person name="Bekel T."/>
            <person name="Bischoff N."/>
            <person name="Brune I."/>
            <person name="Chakraborty T."/>
            <person name="Kalinowski J."/>
            <person name="Meyer F."/>
            <person name="Rupp O."/>
            <person name="Schneiker S."/>
            <person name="Viehoever P."/>
            <person name="Puehler A."/>
        </authorList>
    </citation>
    <scope>NUCLEOTIDE SEQUENCE [LARGE SCALE GENOMIC DNA]</scope>
    <source>
        <strain>K411</strain>
    </source>
</reference>
<sequence length="341" mass="37298">MSSGTEHRRNQVLRAIVSDFIASHEPVGSKMLVDRHQLGVSSATIRNDMAVLEAEGYITQQHASSGRIPTVKGYRRFVDGINEVKPLSTPERRAILDFLEHGVDLEDVLRRSVQLLSQLTRQVAVVQMPDLRRGRVKHCELVKLGSHRILLVLITDTGRVDQRNVDLGQPISDDDLPRLRDLVNSAMVGRTLDDACTNIAALANEAKGNSMPEELRDVALVVTTVLVETLLERPNDRLILAGTPNLMRTSELSPVVEALEEQVVVLKLLNSVRDLQVQVSIGEENEDEELRGASVVSTGYGNANAVLGGMGVVGPTHLDYSGTISSVTAVAHYVSRILSEE</sequence>
<accession>Q4JWP8</accession>
<comment type="function">
    <text evidence="1">Negative regulator of class I heat shock genes (grpE-dnaK-dnaJ and groELS operons). Prevents heat-shock induction of these operons.</text>
</comment>
<comment type="similarity">
    <text evidence="1">Belongs to the HrcA family.</text>
</comment>